<gene>
    <name type="primary">nfe2</name>
</gene>
<accession>Q52994</accession>
<organism>
    <name type="scientific">Rhizobium meliloti</name>
    <name type="common">Ensifer meliloti</name>
    <name type="synonym">Sinorhizobium meliloti</name>
    <dbReference type="NCBI Taxonomy" id="382"/>
    <lineage>
        <taxon>Bacteria</taxon>
        <taxon>Pseudomonadati</taxon>
        <taxon>Pseudomonadota</taxon>
        <taxon>Alphaproteobacteria</taxon>
        <taxon>Hyphomicrobiales</taxon>
        <taxon>Rhizobiaceae</taxon>
        <taxon>Sinorhizobium/Ensifer group</taxon>
        <taxon>Sinorhizobium</taxon>
    </lineage>
</organism>
<geneLocation type="plasmid">
    <name>pRmeGR4b</name>
</geneLocation>
<keyword id="KW-0536">Nodulation</keyword>
<keyword id="KW-0614">Plasmid</keyword>
<name>NFE2_RHIML</name>
<protein>
    <recommendedName>
        <fullName>Protein nfe2</fullName>
    </recommendedName>
</protein>
<reference key="1">
    <citation type="journal article" date="1993" name="J. Mol. Biol.">
        <title>Nucleotide sequence and characterization of Rhizobium meliloti nodulation competitiveness genes nfe.</title>
        <authorList>
            <person name="Soto M.J."/>
            <person name="Zorzano A."/>
            <person name="Mercado-Blanco J."/>
            <person name="Lepek V."/>
            <person name="Olivares J."/>
            <person name="Toro N."/>
        </authorList>
    </citation>
    <scope>NUCLEOTIDE SEQUENCE [GENOMIC DNA]</scope>
    <source>
        <strain>GR4</strain>
    </source>
</reference>
<comment type="function">
    <text>Responsible for the nodulation efficiency and competitive ability of strain GR4 on alfalfa roots.</text>
</comment>
<dbReference type="EMBL" id="X66124">
    <property type="protein sequence ID" value="CAA46915.1"/>
    <property type="molecule type" value="Genomic_DNA"/>
</dbReference>
<dbReference type="PIR" id="S35089">
    <property type="entry name" value="S35089"/>
</dbReference>
<dbReference type="RefSeq" id="WP_015241664.1">
    <property type="nucleotide sequence ID" value="NZ_RPLX01000153.1"/>
</dbReference>
<dbReference type="SMR" id="Q52994"/>
<dbReference type="GO" id="GO:0008883">
    <property type="term" value="F:glutamyl-tRNA reductase activity"/>
    <property type="evidence" value="ECO:0007669"/>
    <property type="project" value="InterPro"/>
</dbReference>
<dbReference type="GO" id="GO:0050661">
    <property type="term" value="F:NADP binding"/>
    <property type="evidence" value="ECO:0007669"/>
    <property type="project" value="InterPro"/>
</dbReference>
<dbReference type="GO" id="GO:0033014">
    <property type="term" value="P:tetrapyrrole biosynthetic process"/>
    <property type="evidence" value="ECO:0007669"/>
    <property type="project" value="InterPro"/>
</dbReference>
<dbReference type="Gene3D" id="3.30.460.30">
    <property type="entry name" value="Glutamyl-tRNA reductase, N-terminal domain"/>
    <property type="match status" value="1"/>
</dbReference>
<dbReference type="Gene3D" id="3.40.50.720">
    <property type="entry name" value="NAD(P)-binding Rossmann-like Domain"/>
    <property type="match status" value="1"/>
</dbReference>
<dbReference type="InterPro" id="IPR036343">
    <property type="entry name" value="GluRdtase_N_sf"/>
</dbReference>
<dbReference type="SUPFAM" id="SSF69742">
    <property type="entry name" value="Glutamyl tRNA-reductase catalytic, N-terminal domain"/>
    <property type="match status" value="1"/>
</dbReference>
<proteinExistence type="predicted"/>
<feature type="chain" id="PRO_0000096788" description="Protein nfe2">
    <location>
        <begin position="1"/>
        <end position="311"/>
    </location>
</feature>
<sequence length="311" mass="34324">MTDLIGFYSDHKIAAPLAIAQRSAKFKPFAAEIARRGILQIATCARLEFYGEKSVLEDIDGKPFFGFSYGRVEGAISIAERLATIAAGVHSQILGEGFISGQLMQAIESGDPNLSIFKVARVAVDLGSAARKRQEFFAEFDYVQIVEDIIADRFSDKAPLDRIYIIGAGMLGQELIRGNVGERFRSTVVITRNPKKLRKRLNTGPKTNVTFMRPSEVGRTREPGSMVVIATTDVDNKYKAILQETLLRLGPRIILDLSSIPVLTREAIGELDYVNMYGDEFLRFIEQNNQRLAPKLPLVVSDIKAALGAAV</sequence>